<keyword id="KW-0215">Deoxyribonucleotide synthesis</keyword>
<keyword id="KW-1015">Disulfide bond</keyword>
<keyword id="KW-0249">Electron transport</keyword>
<keyword id="KW-0676">Redox-active center</keyword>
<keyword id="KW-1185">Reference proteome</keyword>
<keyword id="KW-0813">Transport</keyword>
<sequence length="87" mass="9924">MFTVIFGRPGCPYCVRAKELAEKLSKERDDFNYRYIDIHAEGITKADLEKTVGKPVETVPQIFVDQKHIGGCTDFEAWAKENLNLFA</sequence>
<reference key="1">
    <citation type="submission" date="1999-01" db="EMBL/GenBank/DDBJ databases">
        <title>Cloning and characterization of the major nitrotreductase from Salmonella typhimurium TA1535.</title>
        <authorList>
            <person name="Lambert I.B."/>
            <person name="Boroumandi S."/>
            <person name="Nokhbeh M.R."/>
            <person name="Pokorny N.S."/>
            <person name="Koziarz P."/>
        </authorList>
    </citation>
    <scope>NUCLEOTIDE SEQUENCE [GENOMIC DNA]</scope>
    <source>
        <strain>ATCC 29629 / TA 1535</strain>
    </source>
</reference>
<reference key="2">
    <citation type="journal article" date="2001" name="Nature">
        <title>Complete genome sequence of Salmonella enterica serovar Typhimurium LT2.</title>
        <authorList>
            <person name="McClelland M."/>
            <person name="Sanderson K.E."/>
            <person name="Spieth J."/>
            <person name="Clifton S.W."/>
            <person name="Latreille P."/>
            <person name="Courtney L."/>
            <person name="Porwollik S."/>
            <person name="Ali J."/>
            <person name="Dante M."/>
            <person name="Du F."/>
            <person name="Hou S."/>
            <person name="Layman D."/>
            <person name="Leonard S."/>
            <person name="Nguyen C."/>
            <person name="Scott K."/>
            <person name="Holmes A."/>
            <person name="Grewal N."/>
            <person name="Mulvaney E."/>
            <person name="Ryan E."/>
            <person name="Sun H."/>
            <person name="Florea L."/>
            <person name="Miller W."/>
            <person name="Stoneking T."/>
            <person name="Nhan M."/>
            <person name="Waterston R."/>
            <person name="Wilson R.K."/>
        </authorList>
    </citation>
    <scope>NUCLEOTIDE SEQUENCE [LARGE SCALE GENOMIC DNA]</scope>
    <source>
        <strain>LT2 / SGSC1412 / ATCC 700720</strain>
    </source>
</reference>
<accession>P0A1P8</accession>
<accession>Q9Z5Z3</accession>
<proteinExistence type="inferred from homology"/>
<dbReference type="EMBL" id="AF117952">
    <property type="protein sequence ID" value="AAD18026.1"/>
    <property type="molecule type" value="Genomic_DNA"/>
</dbReference>
<dbReference type="EMBL" id="AE006468">
    <property type="protein sequence ID" value="AAL19808.1"/>
    <property type="molecule type" value="Genomic_DNA"/>
</dbReference>
<dbReference type="RefSeq" id="NP_459849.1">
    <property type="nucleotide sequence ID" value="NC_003197.2"/>
</dbReference>
<dbReference type="RefSeq" id="WP_000495513.1">
    <property type="nucleotide sequence ID" value="NC_003197.2"/>
</dbReference>
<dbReference type="SMR" id="P0A1P8"/>
<dbReference type="STRING" id="99287.STM0872"/>
<dbReference type="PaxDb" id="99287-STM0872"/>
<dbReference type="GeneID" id="1252391"/>
<dbReference type="KEGG" id="stm:STM0872"/>
<dbReference type="PATRIC" id="fig|99287.12.peg.911"/>
<dbReference type="HOGENOM" id="CLU_026126_7_3_6"/>
<dbReference type="OMA" id="VGGCTEF"/>
<dbReference type="PhylomeDB" id="P0A1P8"/>
<dbReference type="BioCyc" id="SENT99287:STM0872-MONOMER"/>
<dbReference type="Proteomes" id="UP000001014">
    <property type="component" value="Chromosome"/>
</dbReference>
<dbReference type="GO" id="GO:0005737">
    <property type="term" value="C:cytoplasm"/>
    <property type="evidence" value="ECO:0000318"/>
    <property type="project" value="GO_Central"/>
</dbReference>
<dbReference type="GO" id="GO:0009055">
    <property type="term" value="F:electron transfer activity"/>
    <property type="evidence" value="ECO:0007669"/>
    <property type="project" value="InterPro"/>
</dbReference>
<dbReference type="GO" id="GO:0015038">
    <property type="term" value="F:glutathione disulfide oxidoreductase activity"/>
    <property type="evidence" value="ECO:0000318"/>
    <property type="project" value="GO_Central"/>
</dbReference>
<dbReference type="GO" id="GO:0015035">
    <property type="term" value="F:protein-disulfide reductase activity"/>
    <property type="evidence" value="ECO:0007669"/>
    <property type="project" value="InterPro"/>
</dbReference>
<dbReference type="GO" id="GO:0045454">
    <property type="term" value="P:cell redox homeostasis"/>
    <property type="evidence" value="ECO:0007669"/>
    <property type="project" value="InterPro"/>
</dbReference>
<dbReference type="GO" id="GO:0034599">
    <property type="term" value="P:cellular response to oxidative stress"/>
    <property type="evidence" value="ECO:0000318"/>
    <property type="project" value="GO_Central"/>
</dbReference>
<dbReference type="GO" id="GO:0009263">
    <property type="term" value="P:deoxyribonucleotide biosynthetic process"/>
    <property type="evidence" value="ECO:0007669"/>
    <property type="project" value="UniProtKB-KW"/>
</dbReference>
<dbReference type="CDD" id="cd02066">
    <property type="entry name" value="GRX_family"/>
    <property type="match status" value="1"/>
</dbReference>
<dbReference type="Gene3D" id="3.40.30.10">
    <property type="entry name" value="Glutaredoxin"/>
    <property type="match status" value="1"/>
</dbReference>
<dbReference type="InterPro" id="IPR011767">
    <property type="entry name" value="GLR_AS"/>
</dbReference>
<dbReference type="InterPro" id="IPR002109">
    <property type="entry name" value="Glutaredoxin"/>
</dbReference>
<dbReference type="InterPro" id="IPR014025">
    <property type="entry name" value="Glutaredoxin_subgr"/>
</dbReference>
<dbReference type="InterPro" id="IPR011902">
    <property type="entry name" value="GRXA"/>
</dbReference>
<dbReference type="InterPro" id="IPR036249">
    <property type="entry name" value="Thioredoxin-like_sf"/>
</dbReference>
<dbReference type="NCBIfam" id="TIGR02183">
    <property type="entry name" value="GRXA"/>
    <property type="match status" value="1"/>
</dbReference>
<dbReference type="NCBIfam" id="NF008401">
    <property type="entry name" value="PRK11200.1"/>
    <property type="match status" value="1"/>
</dbReference>
<dbReference type="PANTHER" id="PTHR45694:SF28">
    <property type="entry name" value="GLUTAREDOXIN 1"/>
    <property type="match status" value="1"/>
</dbReference>
<dbReference type="PANTHER" id="PTHR45694">
    <property type="entry name" value="GLUTAREDOXIN 2"/>
    <property type="match status" value="1"/>
</dbReference>
<dbReference type="Pfam" id="PF00462">
    <property type="entry name" value="Glutaredoxin"/>
    <property type="match status" value="1"/>
</dbReference>
<dbReference type="PRINTS" id="PR00160">
    <property type="entry name" value="GLUTAREDOXIN"/>
</dbReference>
<dbReference type="SUPFAM" id="SSF52833">
    <property type="entry name" value="Thioredoxin-like"/>
    <property type="match status" value="1"/>
</dbReference>
<dbReference type="PROSITE" id="PS00195">
    <property type="entry name" value="GLUTAREDOXIN_1"/>
    <property type="match status" value="1"/>
</dbReference>
<dbReference type="PROSITE" id="PS51354">
    <property type="entry name" value="GLUTAREDOXIN_2"/>
    <property type="match status" value="1"/>
</dbReference>
<evidence type="ECO:0000250" key="1"/>
<evidence type="ECO:0000255" key="2">
    <source>
        <dbReference type="PROSITE-ProRule" id="PRU00686"/>
    </source>
</evidence>
<evidence type="ECO:0000305" key="3"/>
<name>GLRX1_SALTY</name>
<comment type="function">
    <text evidence="1">The disulfide bond functions as an electron carrier in the glutathione-dependent synthesis of deoxyribonucleotides by the enzyme ribonucleotide reductase. In addition, it is also involved in reducing some disulfides in a coupled system with glutathione reductase (By similarity).</text>
</comment>
<comment type="subunit">
    <text evidence="1">Monomer.</text>
</comment>
<comment type="similarity">
    <text evidence="3">Belongs to the glutaredoxin family.</text>
</comment>
<gene>
    <name type="primary">grxA</name>
    <name type="ordered locus">STM0872</name>
</gene>
<feature type="chain" id="PRO_0000141583" description="Glutaredoxin 1">
    <location>
        <begin position="1"/>
        <end position="87"/>
    </location>
</feature>
<feature type="domain" description="Glutaredoxin" evidence="2">
    <location>
        <begin position="1"/>
        <end position="87"/>
    </location>
</feature>
<feature type="disulfide bond" description="Redox-active" evidence="1">
    <location>
        <begin position="11"/>
        <end position="14"/>
    </location>
</feature>
<feature type="sequence conflict" description="In Ref. 1; AAD18026." evidence="3" ref="1">
    <original>KTVG</original>
    <variation>QNRS</variation>
    <location>
        <begin position="50"/>
        <end position="53"/>
    </location>
</feature>
<protein>
    <recommendedName>
        <fullName>Glutaredoxin 1</fullName>
        <shortName>Grx1</shortName>
    </recommendedName>
</protein>
<organism>
    <name type="scientific">Salmonella typhimurium (strain LT2 / SGSC1412 / ATCC 700720)</name>
    <dbReference type="NCBI Taxonomy" id="99287"/>
    <lineage>
        <taxon>Bacteria</taxon>
        <taxon>Pseudomonadati</taxon>
        <taxon>Pseudomonadota</taxon>
        <taxon>Gammaproteobacteria</taxon>
        <taxon>Enterobacterales</taxon>
        <taxon>Enterobacteriaceae</taxon>
        <taxon>Salmonella</taxon>
    </lineage>
</organism>